<evidence type="ECO:0000250" key="1"/>
<evidence type="ECO:0000250" key="2">
    <source>
        <dbReference type="UniProtKB" id="D7GXG0"/>
    </source>
</evidence>
<evidence type="ECO:0000250" key="3">
    <source>
        <dbReference type="UniProtKB" id="G0L322"/>
    </source>
</evidence>
<evidence type="ECO:0000255" key="4"/>
<evidence type="ECO:0000255" key="5">
    <source>
        <dbReference type="PROSITE-ProRule" id="PRU01098"/>
    </source>
</evidence>
<evidence type="ECO:0000305" key="6"/>
<protein>
    <recommendedName>
        <fullName>Beta-porphyranase E</fullName>
        <ecNumber>3.2.1.178</ecNumber>
    </recommendedName>
</protein>
<organism>
    <name type="scientific">Zobellia galactanivorans (strain DSM 12802 / CCUG 47099 / CIP 106680 / NCIMB 13871 / Dsij)</name>
    <dbReference type="NCBI Taxonomy" id="63186"/>
    <lineage>
        <taxon>Bacteria</taxon>
        <taxon>Pseudomonadati</taxon>
        <taxon>Bacteroidota</taxon>
        <taxon>Flavobacteriia</taxon>
        <taxon>Flavobacteriales</taxon>
        <taxon>Flavobacteriaceae</taxon>
        <taxon>Zobellia</taxon>
    </lineage>
</organism>
<keyword id="KW-0326">Glycosidase</keyword>
<keyword id="KW-0378">Hydrolase</keyword>
<keyword id="KW-0574">Periplasm</keyword>
<keyword id="KW-1185">Reference proteome</keyword>
<keyword id="KW-0732">Signal</keyword>
<sequence>MGNTMLLTLLLVVVAAYGQTPPPPEGFRWVKNESFSDEFDGEVLDTTKWYARSPYWVNGRPPATFRAGSVSVKEGKLQIKNSVLDGDKKYNIAGGAVASVAKDALYGYYEARMKASSISMSSTFWMKNKPDTKECPFEVQELDIVEVVGQQKTGWDFRTNLKSNTHIFYTDCDGEKTVKSAGGTEAKIDPPADEAYHVYGCWWVDANTIKIYLDGEYQFTMNPSTHFRDTPFNKPMYMHMVTETYNWETPPTPEELADDTKNTTYYDWVRSYTLLPVDQ</sequence>
<comment type="function">
    <text evidence="1">Cleaves the sulfated polysaccharide porphyran at the (1-&gt;4) linkages between beta-D-galactopyranose and alpha-L-galactopyranose-6-sulfate, forming mostly the disaccharide alpha-L-galactopyranose-6-sulfate-(1-&gt;3)-beta-D-galactose.</text>
</comment>
<comment type="catalytic activity">
    <reaction>
        <text>Hydrolysis of beta-D-galactopyranose-(1-&gt;4)-alpha-L-galactopyranose-6-sulfate linkages in porphyran.</text>
        <dbReference type="EC" id="3.2.1.178"/>
    </reaction>
</comment>
<comment type="subcellular location">
    <subcellularLocation>
        <location evidence="6">Periplasm</location>
    </subcellularLocation>
</comment>
<comment type="similarity">
    <text evidence="6">Belongs to the glycosyl hydrolase 16 family.</text>
</comment>
<name>PORE_ZOBGA</name>
<reference key="1">
    <citation type="journal article" date="2010" name="Nature">
        <title>Transfer of carbohydrate-active enzymes from marine bacteria to Japanese gut microbiota.</title>
        <authorList>
            <person name="Hehemann J.H."/>
            <person name="Correc G."/>
            <person name="Barbeyron T."/>
            <person name="Helbert W."/>
            <person name="Czjzek M."/>
            <person name="Michel G."/>
        </authorList>
    </citation>
    <scope>NUCLEOTIDE SEQUENCE [GENOMIC DNA]</scope>
    <source>
        <strain>DSM 12802 / CCUG 47099 / CIP 106680 / KCTC 12921 / NCIMB 13871 / Dsij</strain>
    </source>
</reference>
<reference key="2">
    <citation type="submission" date="2009-07" db="EMBL/GenBank/DDBJ databases">
        <title>Complete genome sequence of Zobellia galactanivorans Dsij.</title>
        <authorList>
            <consortium name="Genoscope - CEA"/>
        </authorList>
    </citation>
    <scope>NUCLEOTIDE SEQUENCE [LARGE SCALE GENOMIC DNA]</scope>
    <source>
        <strain>DSM 12802 / CCUG 47099 / CIP 106680 / KCTC 12921 / NCIMB 13871 / Dsij</strain>
    </source>
</reference>
<dbReference type="EC" id="3.2.1.178"/>
<dbReference type="EMBL" id="FQ073841">
    <property type="protein sequence ID" value="CBM41185.1"/>
    <property type="molecule type" value="Genomic_DNA"/>
</dbReference>
<dbReference type="EMBL" id="FP476056">
    <property type="protein sequence ID" value="CAZ97778.1"/>
    <property type="molecule type" value="Genomic_DNA"/>
</dbReference>
<dbReference type="RefSeq" id="WP_013994968.1">
    <property type="nucleotide sequence ID" value="NC_015844.1"/>
</dbReference>
<dbReference type="SMR" id="D7GXG3"/>
<dbReference type="STRING" id="63186.ZOBELLIA_3640"/>
<dbReference type="CAZy" id="GH16">
    <property type="family name" value="Glycoside Hydrolase Family 16"/>
</dbReference>
<dbReference type="KEGG" id="zga:ZOBELLIA_3640"/>
<dbReference type="HOGENOM" id="CLU_053494_0_0_10"/>
<dbReference type="OrthoDB" id="657277at2"/>
<dbReference type="Proteomes" id="UP000008898">
    <property type="component" value="Chromosome"/>
</dbReference>
<dbReference type="GO" id="GO:0042597">
    <property type="term" value="C:periplasmic space"/>
    <property type="evidence" value="ECO:0007669"/>
    <property type="project" value="UniProtKB-SubCell"/>
</dbReference>
<dbReference type="GO" id="GO:0033916">
    <property type="term" value="F:beta-agarase activity"/>
    <property type="evidence" value="ECO:0007669"/>
    <property type="project" value="InterPro"/>
</dbReference>
<dbReference type="GO" id="GO:0005975">
    <property type="term" value="P:carbohydrate metabolic process"/>
    <property type="evidence" value="ECO:0007669"/>
    <property type="project" value="InterPro"/>
</dbReference>
<dbReference type="CDD" id="cd02178">
    <property type="entry name" value="GH16_beta_agarase"/>
    <property type="match status" value="1"/>
</dbReference>
<dbReference type="Gene3D" id="2.60.120.200">
    <property type="match status" value="1"/>
</dbReference>
<dbReference type="InterPro" id="IPR016287">
    <property type="entry name" value="Beta_agarase"/>
</dbReference>
<dbReference type="InterPro" id="IPR013320">
    <property type="entry name" value="ConA-like_dom_sf"/>
</dbReference>
<dbReference type="InterPro" id="IPR000757">
    <property type="entry name" value="GH16"/>
</dbReference>
<dbReference type="InterPro" id="IPR050546">
    <property type="entry name" value="Glycosyl_Hydrlase_16"/>
</dbReference>
<dbReference type="PANTHER" id="PTHR10963:SF55">
    <property type="entry name" value="GLYCOSIDE HYDROLASE FAMILY 16 PROTEIN"/>
    <property type="match status" value="1"/>
</dbReference>
<dbReference type="PANTHER" id="PTHR10963">
    <property type="entry name" value="GLYCOSYL HYDROLASE-RELATED"/>
    <property type="match status" value="1"/>
</dbReference>
<dbReference type="Pfam" id="PF00722">
    <property type="entry name" value="Glyco_hydro_16"/>
    <property type="match status" value="1"/>
</dbReference>
<dbReference type="PIRSF" id="PIRSF001097">
    <property type="entry name" value="Agarase"/>
    <property type="match status" value="1"/>
</dbReference>
<dbReference type="SUPFAM" id="SSF49899">
    <property type="entry name" value="Concanavalin A-like lectins/glucanases"/>
    <property type="match status" value="1"/>
</dbReference>
<dbReference type="PROSITE" id="PS51762">
    <property type="entry name" value="GH16_2"/>
    <property type="match status" value="1"/>
</dbReference>
<proteinExistence type="inferred from homology"/>
<gene>
    <name type="primary">porE</name>
    <name type="ordered locus">zobellia_3640</name>
</gene>
<feature type="signal peptide" evidence="4">
    <location>
        <begin position="1"/>
        <end position="18"/>
    </location>
</feature>
<feature type="chain" id="PRO_0000422024" description="Beta-porphyranase E">
    <location>
        <begin position="19"/>
        <end position="279"/>
    </location>
</feature>
<feature type="domain" description="GH16" evidence="5">
    <location>
        <begin position="19"/>
        <end position="277"/>
    </location>
</feature>
<feature type="active site" description="Nucleophile" evidence="3">
    <location>
        <position position="141"/>
    </location>
</feature>
<feature type="active site" description="Proton donor" evidence="3">
    <location>
        <position position="146"/>
    </location>
</feature>
<feature type="binding site" evidence="2">
    <location>
        <position position="56"/>
    </location>
    <ligand>
        <name>substrate</name>
    </ligand>
</feature>
<feature type="binding site" evidence="2">
    <location>
        <position position="60"/>
    </location>
    <ligand>
        <name>substrate</name>
    </ligand>
</feature>
<feature type="binding site" evidence="2">
    <location>
        <position position="141"/>
    </location>
    <ligand>
        <name>substrate</name>
    </ligand>
</feature>
<feature type="binding site" evidence="2">
    <location>
        <position position="146"/>
    </location>
    <ligand>
        <name>substrate</name>
    </ligand>
</feature>
<feature type="binding site" evidence="2">
    <location>
        <position position="243"/>
    </location>
    <ligand>
        <name>substrate</name>
    </ligand>
</feature>
<accession>D7GXG3</accession>